<comment type="function">
    <text evidence="1 2">Plays an essential role in the homeostatic regulation of sphingolipid de novo biosynthesis by modulating the activity of the serine palmitoyltransferase (SPT) in response to ceramide levels (By similarity). When complexed to SPT, the binding of ceramides to its N-terminus stabilizes a conformation that block SPT substrate entry, hence preventing SPT catalytic activity. Through this mechanism, maintains ceramide levels at sufficient concentrations for the production of complex sphingolipids, but which prevents the accumulation of ceramides to levels that trigger apoptosis (By similarity).</text>
</comment>
<comment type="subunit">
    <text evidence="1">Ceramide-sensitive subunit of the serine palmitoyltransferase (SPT) complex, which is also composed of SPTLC1, SPTLC2/3 and SPTSSA/B.</text>
</comment>
<comment type="subcellular location">
    <subcellularLocation>
        <location evidence="3">Endoplasmic reticulum membrane</location>
        <topology evidence="3">Multi-pass membrane protein</topology>
    </subcellularLocation>
</comment>
<comment type="domain">
    <text evidence="1">Ceramides bind to ORMDL3 N-terminus and stabilize it in a conformation that physically restricts the accessibility of the substrates to their binding sites in the serine palmitoyltransferase (SPT) complex, hence inhibiting SPT catalytic activity. In the absence of ceramides, the N-terminus is flexible and permits substrate binding, thus liberating SPT from inhibition.</text>
</comment>
<comment type="similarity">
    <text evidence="5">Belongs to the ORM family.</text>
</comment>
<name>ORML1_BOVIN</name>
<evidence type="ECO:0000250" key="1">
    <source>
        <dbReference type="UniProtKB" id="Q8N138"/>
    </source>
</evidence>
<evidence type="ECO:0000250" key="2">
    <source>
        <dbReference type="UniProtKB" id="Q921I0"/>
    </source>
</evidence>
<evidence type="ECO:0000250" key="3">
    <source>
        <dbReference type="UniProtKB" id="Q9P0S3"/>
    </source>
</evidence>
<evidence type="ECO:0000255" key="4"/>
<evidence type="ECO:0000305" key="5"/>
<dbReference type="EMBL" id="BC114067">
    <property type="protein sequence ID" value="AAI14068.1"/>
    <property type="molecule type" value="mRNA"/>
</dbReference>
<dbReference type="RefSeq" id="NP_001070601.1">
    <property type="nucleotide sequence ID" value="NM_001077133.1"/>
</dbReference>
<dbReference type="RefSeq" id="XP_005202286.1">
    <property type="nucleotide sequence ID" value="XM_005202229.4"/>
</dbReference>
<dbReference type="SMR" id="Q29RQ9"/>
<dbReference type="FunCoup" id="Q29RQ9">
    <property type="interactions" value="2722"/>
</dbReference>
<dbReference type="STRING" id="9913.ENSBTAP00000016673"/>
<dbReference type="PaxDb" id="9913-ENSBTAP00000016673"/>
<dbReference type="Ensembl" id="ENSBTAT00000016673.5">
    <property type="protein sequence ID" value="ENSBTAP00000016673.3"/>
    <property type="gene ID" value="ENSBTAG00000012561.5"/>
</dbReference>
<dbReference type="GeneID" id="768077"/>
<dbReference type="KEGG" id="bta:768077"/>
<dbReference type="CTD" id="94101"/>
<dbReference type="VEuPathDB" id="HostDB:ENSBTAG00000012561"/>
<dbReference type="VGNC" id="VGNC:32452">
    <property type="gene designation" value="ORMDL1"/>
</dbReference>
<dbReference type="eggNOG" id="KOG3319">
    <property type="taxonomic scope" value="Eukaryota"/>
</dbReference>
<dbReference type="GeneTree" id="ENSGT00950000183178"/>
<dbReference type="HOGENOM" id="CLU_072117_3_0_1"/>
<dbReference type="InParanoid" id="Q29RQ9"/>
<dbReference type="OMA" id="IVSAFRC"/>
<dbReference type="OrthoDB" id="1932233at2759"/>
<dbReference type="TreeFam" id="TF323369"/>
<dbReference type="Reactome" id="R-BTA-1660661">
    <property type="pathway name" value="Sphingolipid de novo biosynthesis"/>
</dbReference>
<dbReference type="Proteomes" id="UP000009136">
    <property type="component" value="Chromosome 2"/>
</dbReference>
<dbReference type="Bgee" id="ENSBTAG00000012561">
    <property type="expression patterns" value="Expressed in caput epididymis and 106 other cell types or tissues"/>
</dbReference>
<dbReference type="GO" id="GO:0005789">
    <property type="term" value="C:endoplasmic reticulum membrane"/>
    <property type="evidence" value="ECO:0000250"/>
    <property type="project" value="UniProtKB"/>
</dbReference>
<dbReference type="GO" id="GO:0017059">
    <property type="term" value="C:serine palmitoyltransferase complex"/>
    <property type="evidence" value="ECO:0000318"/>
    <property type="project" value="GO_Central"/>
</dbReference>
<dbReference type="GO" id="GO:0006672">
    <property type="term" value="P:ceramide metabolic process"/>
    <property type="evidence" value="ECO:0000250"/>
    <property type="project" value="UniProtKB"/>
</dbReference>
<dbReference type="GO" id="GO:0090156">
    <property type="term" value="P:intracellular sphingolipid homeostasis"/>
    <property type="evidence" value="ECO:0000318"/>
    <property type="project" value="GO_Central"/>
</dbReference>
<dbReference type="GO" id="GO:0061744">
    <property type="term" value="P:motor behavior"/>
    <property type="evidence" value="ECO:0007669"/>
    <property type="project" value="Ensembl"/>
</dbReference>
<dbReference type="GO" id="GO:0042552">
    <property type="term" value="P:myelination"/>
    <property type="evidence" value="ECO:0007669"/>
    <property type="project" value="Ensembl"/>
</dbReference>
<dbReference type="GO" id="GO:1900060">
    <property type="term" value="P:negative regulation of ceramide biosynthetic process"/>
    <property type="evidence" value="ECO:0007669"/>
    <property type="project" value="Ensembl"/>
</dbReference>
<dbReference type="GO" id="GO:0030148">
    <property type="term" value="P:sphingolipid biosynthetic process"/>
    <property type="evidence" value="ECO:0000318"/>
    <property type="project" value="GO_Central"/>
</dbReference>
<dbReference type="GO" id="GO:0006686">
    <property type="term" value="P:sphingomyelin biosynthetic process"/>
    <property type="evidence" value="ECO:0007669"/>
    <property type="project" value="Ensembl"/>
</dbReference>
<dbReference type="InterPro" id="IPR007203">
    <property type="entry name" value="ORMDL"/>
</dbReference>
<dbReference type="PANTHER" id="PTHR12665">
    <property type="entry name" value="ORMDL PROTEINS"/>
    <property type="match status" value="1"/>
</dbReference>
<dbReference type="Pfam" id="PF04061">
    <property type="entry name" value="ORMDL"/>
    <property type="match status" value="1"/>
</dbReference>
<dbReference type="PIRSF" id="PIRSF018147">
    <property type="entry name" value="ORMDL"/>
    <property type="match status" value="1"/>
</dbReference>
<keyword id="KW-0256">Endoplasmic reticulum</keyword>
<keyword id="KW-0472">Membrane</keyword>
<keyword id="KW-1185">Reference proteome</keyword>
<keyword id="KW-0812">Transmembrane</keyword>
<keyword id="KW-1133">Transmembrane helix</keyword>
<protein>
    <recommendedName>
        <fullName>ORM1-like protein 1</fullName>
    </recommendedName>
</protein>
<organism>
    <name type="scientific">Bos taurus</name>
    <name type="common">Bovine</name>
    <dbReference type="NCBI Taxonomy" id="9913"/>
    <lineage>
        <taxon>Eukaryota</taxon>
        <taxon>Metazoa</taxon>
        <taxon>Chordata</taxon>
        <taxon>Craniata</taxon>
        <taxon>Vertebrata</taxon>
        <taxon>Euteleostomi</taxon>
        <taxon>Mammalia</taxon>
        <taxon>Eutheria</taxon>
        <taxon>Laurasiatheria</taxon>
        <taxon>Artiodactyla</taxon>
        <taxon>Ruminantia</taxon>
        <taxon>Pecora</taxon>
        <taxon>Bovidae</taxon>
        <taxon>Bovinae</taxon>
        <taxon>Bos</taxon>
    </lineage>
</organism>
<gene>
    <name type="primary">ORMDL1</name>
</gene>
<reference key="1">
    <citation type="submission" date="2006-02" db="EMBL/GenBank/DDBJ databases">
        <authorList>
            <consortium name="NIH - Mammalian Gene Collection (MGC) project"/>
        </authorList>
    </citation>
    <scope>NUCLEOTIDE SEQUENCE [LARGE SCALE MRNA]</scope>
    <source>
        <strain>Hereford</strain>
        <tissue>Hypothalamus</tissue>
    </source>
</reference>
<feature type="chain" id="PRO_0000263064" description="ORM1-like protein 1">
    <location>
        <begin position="1"/>
        <end position="153"/>
    </location>
</feature>
<feature type="topological domain" description="Cytoplasmic" evidence="4">
    <location>
        <begin position="1"/>
        <end position="26"/>
    </location>
</feature>
<feature type="transmembrane region" description="Helical" evidence="4">
    <location>
        <begin position="27"/>
        <end position="46"/>
    </location>
</feature>
<feature type="transmembrane region" description="Helical" evidence="4">
    <location>
        <begin position="47"/>
        <end position="64"/>
    </location>
</feature>
<feature type="topological domain" description="Cytoplasmic" evidence="4">
    <location>
        <begin position="65"/>
        <end position="100"/>
    </location>
</feature>
<feature type="transmembrane region" description="Helical" evidence="4">
    <location>
        <begin position="101"/>
        <end position="121"/>
    </location>
</feature>
<feature type="topological domain" description="Extracellular" evidence="4">
    <location>
        <begin position="122"/>
        <end position="123"/>
    </location>
</feature>
<feature type="transmembrane region" description="Helical" evidence="4">
    <location>
        <begin position="124"/>
        <end position="140"/>
    </location>
</feature>
<feature type="topological domain" description="Cytoplasmic" evidence="4">
    <location>
        <begin position="141"/>
        <end position="153"/>
    </location>
</feature>
<proteinExistence type="evidence at transcript level"/>
<sequence>MNVGVAHSEVNPNTRVMNSRGMWLTYALGVGLLHIVLLSIPFFSVPVAWTLTNVIHNLGMYVFLHAVKGTPFETPDQGKARLLTHWEQLDYGVQFTSSRKFFTISPIILYFLASFYTKYDTTHFILNTASLLSVLIPKMPQLHGVRIFGINKY</sequence>
<accession>Q29RQ9</accession>